<dbReference type="EMBL" id="AM040264">
    <property type="protein sequence ID" value="CAJ10676.1"/>
    <property type="molecule type" value="Genomic_DNA"/>
</dbReference>
<dbReference type="SMR" id="Q2YN35"/>
<dbReference type="STRING" id="359391.BAB1_0720"/>
<dbReference type="KEGG" id="bmf:BAB1_0720"/>
<dbReference type="HOGENOM" id="CLU_014841_3_0_5"/>
<dbReference type="Proteomes" id="UP000002719">
    <property type="component" value="Chromosome I"/>
</dbReference>
<dbReference type="GO" id="GO:0005737">
    <property type="term" value="C:cytoplasm"/>
    <property type="evidence" value="ECO:0007669"/>
    <property type="project" value="UniProtKB-SubCell"/>
</dbReference>
<dbReference type="GO" id="GO:0009380">
    <property type="term" value="C:excinuclease repair complex"/>
    <property type="evidence" value="ECO:0007669"/>
    <property type="project" value="InterPro"/>
</dbReference>
<dbReference type="GO" id="GO:0003677">
    <property type="term" value="F:DNA binding"/>
    <property type="evidence" value="ECO:0007669"/>
    <property type="project" value="UniProtKB-UniRule"/>
</dbReference>
<dbReference type="GO" id="GO:0009381">
    <property type="term" value="F:excinuclease ABC activity"/>
    <property type="evidence" value="ECO:0007669"/>
    <property type="project" value="UniProtKB-UniRule"/>
</dbReference>
<dbReference type="GO" id="GO:0006289">
    <property type="term" value="P:nucleotide-excision repair"/>
    <property type="evidence" value="ECO:0007669"/>
    <property type="project" value="UniProtKB-UniRule"/>
</dbReference>
<dbReference type="GO" id="GO:0009432">
    <property type="term" value="P:SOS response"/>
    <property type="evidence" value="ECO:0007669"/>
    <property type="project" value="UniProtKB-UniRule"/>
</dbReference>
<dbReference type="CDD" id="cd10434">
    <property type="entry name" value="GIY-YIG_UvrC_Cho"/>
    <property type="match status" value="1"/>
</dbReference>
<dbReference type="FunFam" id="3.30.420.340:FF:000001">
    <property type="entry name" value="UvrABC system protein C"/>
    <property type="match status" value="1"/>
</dbReference>
<dbReference type="FunFam" id="3.40.1440.10:FF:000001">
    <property type="entry name" value="UvrABC system protein C"/>
    <property type="match status" value="1"/>
</dbReference>
<dbReference type="Gene3D" id="1.10.150.20">
    <property type="entry name" value="5' to 3' exonuclease, C-terminal subdomain"/>
    <property type="match status" value="1"/>
</dbReference>
<dbReference type="Gene3D" id="3.40.1440.10">
    <property type="entry name" value="GIY-YIG endonuclease"/>
    <property type="match status" value="1"/>
</dbReference>
<dbReference type="Gene3D" id="4.10.860.10">
    <property type="entry name" value="UVR domain"/>
    <property type="match status" value="1"/>
</dbReference>
<dbReference type="Gene3D" id="3.30.420.340">
    <property type="entry name" value="UvrC, RNAse H endonuclease domain"/>
    <property type="match status" value="1"/>
</dbReference>
<dbReference type="HAMAP" id="MF_00203">
    <property type="entry name" value="UvrC"/>
    <property type="match status" value="1"/>
</dbReference>
<dbReference type="InterPro" id="IPR000305">
    <property type="entry name" value="GIY-YIG_endonuc"/>
</dbReference>
<dbReference type="InterPro" id="IPR035901">
    <property type="entry name" value="GIY-YIG_endonuc_sf"/>
</dbReference>
<dbReference type="InterPro" id="IPR047296">
    <property type="entry name" value="GIY-YIG_UvrC_Cho"/>
</dbReference>
<dbReference type="InterPro" id="IPR003583">
    <property type="entry name" value="Hlx-hairpin-Hlx_DNA-bd_motif"/>
</dbReference>
<dbReference type="InterPro" id="IPR010994">
    <property type="entry name" value="RuvA_2-like"/>
</dbReference>
<dbReference type="InterPro" id="IPR001943">
    <property type="entry name" value="UVR_dom"/>
</dbReference>
<dbReference type="InterPro" id="IPR036876">
    <property type="entry name" value="UVR_dom_sf"/>
</dbReference>
<dbReference type="InterPro" id="IPR050066">
    <property type="entry name" value="UvrABC_protein_C"/>
</dbReference>
<dbReference type="InterPro" id="IPR004791">
    <property type="entry name" value="UvrC"/>
</dbReference>
<dbReference type="InterPro" id="IPR001162">
    <property type="entry name" value="UvrC_RNase_H_dom"/>
</dbReference>
<dbReference type="InterPro" id="IPR038476">
    <property type="entry name" value="UvrC_RNase_H_dom_sf"/>
</dbReference>
<dbReference type="NCBIfam" id="NF001824">
    <property type="entry name" value="PRK00558.1-5"/>
    <property type="match status" value="1"/>
</dbReference>
<dbReference type="NCBIfam" id="TIGR00194">
    <property type="entry name" value="uvrC"/>
    <property type="match status" value="1"/>
</dbReference>
<dbReference type="PANTHER" id="PTHR30562:SF1">
    <property type="entry name" value="UVRABC SYSTEM PROTEIN C"/>
    <property type="match status" value="1"/>
</dbReference>
<dbReference type="PANTHER" id="PTHR30562">
    <property type="entry name" value="UVRC/OXIDOREDUCTASE"/>
    <property type="match status" value="1"/>
</dbReference>
<dbReference type="Pfam" id="PF01541">
    <property type="entry name" value="GIY-YIG"/>
    <property type="match status" value="1"/>
</dbReference>
<dbReference type="Pfam" id="PF14520">
    <property type="entry name" value="HHH_5"/>
    <property type="match status" value="1"/>
</dbReference>
<dbReference type="Pfam" id="PF02151">
    <property type="entry name" value="UVR"/>
    <property type="match status" value="1"/>
</dbReference>
<dbReference type="Pfam" id="PF22920">
    <property type="entry name" value="UvrC_RNaseH"/>
    <property type="match status" value="1"/>
</dbReference>
<dbReference type="Pfam" id="PF08459">
    <property type="entry name" value="UvrC_RNaseH_dom"/>
    <property type="match status" value="1"/>
</dbReference>
<dbReference type="SMART" id="SM00465">
    <property type="entry name" value="GIYc"/>
    <property type="match status" value="1"/>
</dbReference>
<dbReference type="SMART" id="SM00278">
    <property type="entry name" value="HhH1"/>
    <property type="match status" value="2"/>
</dbReference>
<dbReference type="SUPFAM" id="SSF46600">
    <property type="entry name" value="C-terminal UvrC-binding domain of UvrB"/>
    <property type="match status" value="1"/>
</dbReference>
<dbReference type="SUPFAM" id="SSF82771">
    <property type="entry name" value="GIY-YIG endonuclease"/>
    <property type="match status" value="1"/>
</dbReference>
<dbReference type="SUPFAM" id="SSF47781">
    <property type="entry name" value="RuvA domain 2-like"/>
    <property type="match status" value="1"/>
</dbReference>
<dbReference type="PROSITE" id="PS50164">
    <property type="entry name" value="GIY_YIG"/>
    <property type="match status" value="1"/>
</dbReference>
<dbReference type="PROSITE" id="PS50151">
    <property type="entry name" value="UVR"/>
    <property type="match status" value="1"/>
</dbReference>
<dbReference type="PROSITE" id="PS50165">
    <property type="entry name" value="UVRC"/>
    <property type="match status" value="1"/>
</dbReference>
<accession>Q2YN35</accession>
<comment type="function">
    <text evidence="1">The UvrABC repair system catalyzes the recognition and processing of DNA lesions. UvrC both incises the 5' and 3' sides of the lesion. The N-terminal half is responsible for the 3' incision and the C-terminal half is responsible for the 5' incision.</text>
</comment>
<comment type="subunit">
    <text evidence="1">Interacts with UvrB in an incision complex.</text>
</comment>
<comment type="subcellular location">
    <subcellularLocation>
        <location evidence="1">Cytoplasm</location>
    </subcellularLocation>
</comment>
<comment type="similarity">
    <text evidence="1">Belongs to the UvrC family.</text>
</comment>
<proteinExistence type="inferred from homology"/>
<protein>
    <recommendedName>
        <fullName evidence="1">UvrABC system protein C</fullName>
        <shortName evidence="1">Protein UvrC</shortName>
    </recommendedName>
    <alternativeName>
        <fullName evidence="1">Excinuclease ABC subunit C</fullName>
    </alternativeName>
</protein>
<evidence type="ECO:0000255" key="1">
    <source>
        <dbReference type="HAMAP-Rule" id="MF_00203"/>
    </source>
</evidence>
<name>UVRC_BRUA2</name>
<sequence length="611" mass="68026">MKRLPNNPGVYRMFNSDGGVLYVGKARNLKKRVSNYARGIGHSNRITRMIRETVTMEFVVTRTETEALLLEANLIKRLRPRFNVLMRDDKSFPYILLTGGHRAPGIFKHRGARSRKGDYFGPFASAGAVGRTINALQRAFLLRTCTDSVFETRTRPCLLYQIKRCSAPCTYEISDEDYAGLVAEAKAFLSGKSQSVKDHLAAAMQAASADLDFEHAAVYRDRLAALSHVQSHQGINPQTVEEADVFAIHQEGGMTCIQVFFFRTGQNWGNRAYFPKADSSLGPAEVLGAFLSQFYDDKPCPKLVLLSETVEEQSLITEALSTRAGHKVQVSVPQRGEKKELVQHALTNAREALGRRLAETSSQARLLQGLAETFGLPRAPRRIEVYDNSHIMGTNAVGGMIVAGPEGFVKNQYRKFNIRSTDITPGDDFGMMREVIERRFSRLVKEHGTPAGEVKNPDAFPAWPDVILIDGGQGQVGAVRQILGEMGISDLVTAIGIAKGVDREAGRERFFMEGKQPFTLPPRDPVLYFIQRLRDEAHRFAIGTHRARRKKEIVRNPLDEIAGIGPTRKRALLHHFGTAKAVSRAAVEDLMQIDGISEAMARAIHDHFRDK</sequence>
<reference key="1">
    <citation type="journal article" date="2005" name="Infect. Immun.">
        <title>Whole-genome analyses of speciation events in pathogenic Brucellae.</title>
        <authorList>
            <person name="Chain P.S."/>
            <person name="Comerci D.J."/>
            <person name="Tolmasky M.E."/>
            <person name="Larimer F.W."/>
            <person name="Malfatti S.A."/>
            <person name="Vergez L.M."/>
            <person name="Aguero F."/>
            <person name="Land M.L."/>
            <person name="Ugalde R.A."/>
            <person name="Garcia E."/>
        </authorList>
    </citation>
    <scope>NUCLEOTIDE SEQUENCE [LARGE SCALE GENOMIC DNA]</scope>
    <source>
        <strain>2308</strain>
    </source>
</reference>
<feature type="chain" id="PRO_0000227406" description="UvrABC system protein C">
    <location>
        <begin position="1"/>
        <end position="611"/>
    </location>
</feature>
<feature type="domain" description="GIY-YIG" evidence="1">
    <location>
        <begin position="6"/>
        <end position="84"/>
    </location>
</feature>
<feature type="domain" description="UVR" evidence="1">
    <location>
        <begin position="194"/>
        <end position="229"/>
    </location>
</feature>
<organism>
    <name type="scientific">Brucella abortus (strain 2308)</name>
    <dbReference type="NCBI Taxonomy" id="359391"/>
    <lineage>
        <taxon>Bacteria</taxon>
        <taxon>Pseudomonadati</taxon>
        <taxon>Pseudomonadota</taxon>
        <taxon>Alphaproteobacteria</taxon>
        <taxon>Hyphomicrobiales</taxon>
        <taxon>Brucellaceae</taxon>
        <taxon>Brucella/Ochrobactrum group</taxon>
        <taxon>Brucella</taxon>
    </lineage>
</organism>
<gene>
    <name evidence="1" type="primary">uvrC</name>
    <name type="ordered locus">BAB1_0720</name>
</gene>
<keyword id="KW-0963">Cytoplasm</keyword>
<keyword id="KW-0227">DNA damage</keyword>
<keyword id="KW-0228">DNA excision</keyword>
<keyword id="KW-0234">DNA repair</keyword>
<keyword id="KW-0267">Excision nuclease</keyword>
<keyword id="KW-1185">Reference proteome</keyword>
<keyword id="KW-0742">SOS response</keyword>